<gene>
    <name evidence="3" type="primary">NEL1</name>
    <name type="ordered locus">YHR035W</name>
</gene>
<accession>P38769</accession>
<accession>D3DKY2</accession>
<keyword id="KW-0963">Cytoplasm</keyword>
<keyword id="KW-0343">GTPase activation</keyword>
<keyword id="KW-0539">Nucleus</keyword>
<keyword id="KW-1185">Reference proteome</keyword>
<sequence>MCSPTNFLYEPFSSDAVTQNYDQNLKCTKCGAYYSMACSLREQNVWTCLFCNQSNSNAELPLVPSNTYTLTSAKKEILSRRTIMIIDAICDPHELNYLVSILCNNYITRQQEPLSIITIQQSGHVILHNAVNHRRDAVFSINEFMTKYNLDKLNASYFEKKISEINQESYWFDKSTQGSLRKLLREICKIANKVNISSKRDKRCTGLALFVSSVLASQCSLSAYCHIVSFLNGPCTKGGGKVMSRERGESMRQNHHFESKSSQLQLSKSPTKFYKKMLEKFANQSLIYEFFIASLDQIGILEMSPLITSSMAVSQFDSFNDERFAMSFQKYLNLRDHNAIYNCHSKIMTAKNAIVVKDFPKYSLNPKNLSLPLEISLGHNSAEAPIQFQTTFENQTEKYIRIETLLLPKANRSFGAQNEIVFSMKKIASRIIDSFAYSSKHTKELMKQLFLLPNQIRGKDVDMVNLIQWCYHIYRSPILSVRNTSPDERYLFLHRIINASKDTCLSLCKPFIWSYSDLKHDWIVLDVPLTRAQILQDDKTTICVDGGSYLVLRRGKLLEKEGRELCCKLLNDLQRFPQPLYVETKTGGSQDRFLKSKIIPLDITDKETLGTEDMTFNEYFNLFTDLSGSK</sequence>
<feature type="chain" id="PRO_0000202891" description="GTPase-activating protein NEL1">
    <location>
        <begin position="1"/>
        <end position="630"/>
    </location>
</feature>
<feature type="mutagenesis site" description="Abolishes the GAP activity." evidence="2">
    <original>R</original>
    <variation>A</variation>
    <location>
        <position position="592"/>
    </location>
</feature>
<proteinExistence type="evidence at protein level"/>
<comment type="function">
    <text evidence="2">Acts as a GTPase-activating protein (GAP) for SAR1 (PubMed:24947508). Contrary to its SEC23 homolog, NEL1 does not associate with SEC24 and its homologs, nor does it associate with the COPII components, suggesting that it is unlikely that NEL1 functions as a structural component of the vesicle coat machinery (PubMed:24947508). May function as a signaling molecule (PubMed:24947508).</text>
</comment>
<comment type="subcellular location">
    <subcellularLocation>
        <location evidence="2">Cytoplasm</location>
    </subcellularLocation>
    <subcellularLocation>
        <location evidence="2">Nucleus</location>
    </subcellularLocation>
    <text evidence="2">Is diffusely localized throughout the cytosol, and does not accumulate at ER exit sites (ERES).</text>
</comment>
<comment type="disruption phenotype">
    <text evidence="2">Leads to a significant growth defect in the temperature-sensitive SAR1-D32G mutant background.</text>
</comment>
<comment type="miscellaneous">
    <text evidence="1">Present with 450 molecules/cell in log phase SD medium.</text>
</comment>
<comment type="similarity">
    <text evidence="4">Belongs to the SEC23/SEC24 family. SEC23 subfamily.</text>
</comment>
<evidence type="ECO:0000269" key="1">
    <source>
    </source>
</evidence>
<evidence type="ECO:0000269" key="2">
    <source>
    </source>
</evidence>
<evidence type="ECO:0000303" key="3">
    <source>
    </source>
</evidence>
<evidence type="ECO:0000305" key="4"/>
<protein>
    <recommendedName>
        <fullName evidence="3">GTPase-activating protein NEL1</fullName>
    </recommendedName>
    <alternativeName>
        <fullName evidence="3">Non-ERES-localized SEC23 homolog 1</fullName>
    </alternativeName>
</protein>
<name>NEL1_YEAST</name>
<organism>
    <name type="scientific">Saccharomyces cerevisiae (strain ATCC 204508 / S288c)</name>
    <name type="common">Baker's yeast</name>
    <dbReference type="NCBI Taxonomy" id="559292"/>
    <lineage>
        <taxon>Eukaryota</taxon>
        <taxon>Fungi</taxon>
        <taxon>Dikarya</taxon>
        <taxon>Ascomycota</taxon>
        <taxon>Saccharomycotina</taxon>
        <taxon>Saccharomycetes</taxon>
        <taxon>Saccharomycetales</taxon>
        <taxon>Saccharomycetaceae</taxon>
        <taxon>Saccharomyces</taxon>
    </lineage>
</organism>
<dbReference type="EMBL" id="U00062">
    <property type="protein sequence ID" value="AAB68909.1"/>
    <property type="molecule type" value="Genomic_DNA"/>
</dbReference>
<dbReference type="EMBL" id="BK006934">
    <property type="protein sequence ID" value="DAA06726.1"/>
    <property type="molecule type" value="Genomic_DNA"/>
</dbReference>
<dbReference type="PIR" id="S46740">
    <property type="entry name" value="S46740"/>
</dbReference>
<dbReference type="RefSeq" id="NP_011900.1">
    <property type="nucleotide sequence ID" value="NM_001179165.1"/>
</dbReference>
<dbReference type="SMR" id="P38769"/>
<dbReference type="BioGRID" id="36466">
    <property type="interactions" value="73"/>
</dbReference>
<dbReference type="DIP" id="DIP-806N"/>
<dbReference type="FunCoup" id="P38769">
    <property type="interactions" value="42"/>
</dbReference>
<dbReference type="IntAct" id="P38769">
    <property type="interactions" value="3"/>
</dbReference>
<dbReference type="MINT" id="P38769"/>
<dbReference type="STRING" id="4932.YHR035W"/>
<dbReference type="iPTMnet" id="P38769"/>
<dbReference type="PaxDb" id="4932-YHR035W"/>
<dbReference type="PeptideAtlas" id="P38769"/>
<dbReference type="EnsemblFungi" id="YHR035W_mRNA">
    <property type="protein sequence ID" value="YHR035W"/>
    <property type="gene ID" value="YHR035W"/>
</dbReference>
<dbReference type="GeneID" id="856430"/>
<dbReference type="KEGG" id="sce:YHR035W"/>
<dbReference type="AGR" id="SGD:S000001077"/>
<dbReference type="SGD" id="S000001077">
    <property type="gene designation" value="NEL1"/>
</dbReference>
<dbReference type="VEuPathDB" id="FungiDB:YHR035W"/>
<dbReference type="eggNOG" id="KOG1986">
    <property type="taxonomic scope" value="Eukaryota"/>
</dbReference>
<dbReference type="GeneTree" id="ENSGT00390000006916"/>
<dbReference type="HOGENOM" id="CLU_463922_0_0_1"/>
<dbReference type="InParanoid" id="P38769"/>
<dbReference type="OMA" id="IVIDTIC"/>
<dbReference type="OrthoDB" id="10256289at2759"/>
<dbReference type="BioCyc" id="YEAST:G3O-31095-MONOMER"/>
<dbReference type="BioGRID-ORCS" id="856430">
    <property type="hits" value="1 hit in 10 CRISPR screens"/>
</dbReference>
<dbReference type="PRO" id="PR:P38769"/>
<dbReference type="Proteomes" id="UP000002311">
    <property type="component" value="Chromosome VIII"/>
</dbReference>
<dbReference type="RNAct" id="P38769">
    <property type="molecule type" value="protein"/>
</dbReference>
<dbReference type="GO" id="GO:0030127">
    <property type="term" value="C:COPII vesicle coat"/>
    <property type="evidence" value="ECO:0000318"/>
    <property type="project" value="GO_Central"/>
</dbReference>
<dbReference type="GO" id="GO:0005829">
    <property type="term" value="C:cytosol"/>
    <property type="evidence" value="ECO:0000314"/>
    <property type="project" value="SGD"/>
</dbReference>
<dbReference type="GO" id="GO:0070971">
    <property type="term" value="C:endoplasmic reticulum exit site"/>
    <property type="evidence" value="ECO:0000318"/>
    <property type="project" value="GO_Central"/>
</dbReference>
<dbReference type="GO" id="GO:0005634">
    <property type="term" value="C:nucleus"/>
    <property type="evidence" value="ECO:0007669"/>
    <property type="project" value="UniProtKB-SubCell"/>
</dbReference>
<dbReference type="GO" id="GO:0005096">
    <property type="term" value="F:GTPase activator activity"/>
    <property type="evidence" value="ECO:0000314"/>
    <property type="project" value="SGD"/>
</dbReference>
<dbReference type="GO" id="GO:0008270">
    <property type="term" value="F:zinc ion binding"/>
    <property type="evidence" value="ECO:0007669"/>
    <property type="project" value="InterPro"/>
</dbReference>
<dbReference type="GO" id="GO:0090110">
    <property type="term" value="P:COPII-coated vesicle cargo loading"/>
    <property type="evidence" value="ECO:0000318"/>
    <property type="project" value="GO_Central"/>
</dbReference>
<dbReference type="GO" id="GO:0006886">
    <property type="term" value="P:intracellular protein transport"/>
    <property type="evidence" value="ECO:0007669"/>
    <property type="project" value="InterPro"/>
</dbReference>
<dbReference type="FunFam" id="3.40.50.410:FF:000123">
    <property type="entry name" value="Protein transport protein SEC23"/>
    <property type="match status" value="1"/>
</dbReference>
<dbReference type="Gene3D" id="1.20.120.730">
    <property type="entry name" value="Sec23/Sec24 helical domain"/>
    <property type="match status" value="1"/>
</dbReference>
<dbReference type="Gene3D" id="3.40.50.410">
    <property type="entry name" value="von Willebrand factor, type A domain"/>
    <property type="match status" value="1"/>
</dbReference>
<dbReference type="Gene3D" id="2.30.30.380">
    <property type="entry name" value="Zn-finger domain of Sec23/24"/>
    <property type="match status" value="1"/>
</dbReference>
<dbReference type="InterPro" id="IPR036180">
    <property type="entry name" value="Gelsolin-like_dom_sf"/>
</dbReference>
<dbReference type="InterPro" id="IPR037364">
    <property type="entry name" value="Sec23"/>
</dbReference>
<dbReference type="InterPro" id="IPR006896">
    <property type="entry name" value="Sec23/24_trunk_dom"/>
</dbReference>
<dbReference type="InterPro" id="IPR036465">
    <property type="entry name" value="vWFA_dom_sf"/>
</dbReference>
<dbReference type="InterPro" id="IPR036174">
    <property type="entry name" value="Znf_Sec23_Sec24_sf"/>
</dbReference>
<dbReference type="PANTHER" id="PTHR11141">
    <property type="entry name" value="PROTEIN TRANSPORT PROTEIN SEC23"/>
    <property type="match status" value="1"/>
</dbReference>
<dbReference type="PANTHER" id="PTHR11141:SF0">
    <property type="entry name" value="PROTEIN TRANSPORT PROTEIN SEC23"/>
    <property type="match status" value="1"/>
</dbReference>
<dbReference type="Pfam" id="PF04811">
    <property type="entry name" value="Sec23_trunk"/>
    <property type="match status" value="1"/>
</dbReference>
<dbReference type="SUPFAM" id="SSF82754">
    <property type="entry name" value="C-terminal, gelsolin-like domain of Sec23/24"/>
    <property type="match status" value="1"/>
</dbReference>
<dbReference type="SUPFAM" id="SSF53300">
    <property type="entry name" value="vWA-like"/>
    <property type="match status" value="1"/>
</dbReference>
<dbReference type="SUPFAM" id="SSF82919">
    <property type="entry name" value="Zn-finger domain of Sec23/24"/>
    <property type="match status" value="1"/>
</dbReference>
<reference key="1">
    <citation type="journal article" date="1994" name="Science">
        <title>Complete nucleotide sequence of Saccharomyces cerevisiae chromosome VIII.</title>
        <authorList>
            <person name="Johnston M."/>
            <person name="Andrews S."/>
            <person name="Brinkman R."/>
            <person name="Cooper J."/>
            <person name="Ding H."/>
            <person name="Dover J."/>
            <person name="Du Z."/>
            <person name="Favello A."/>
            <person name="Fulton L."/>
            <person name="Gattung S."/>
            <person name="Geisel C."/>
            <person name="Kirsten J."/>
            <person name="Kucaba T."/>
            <person name="Hillier L.W."/>
            <person name="Jier M."/>
            <person name="Johnston L."/>
            <person name="Langston Y."/>
            <person name="Latreille P."/>
            <person name="Louis E.J."/>
            <person name="Macri C."/>
            <person name="Mardis E."/>
            <person name="Menezes S."/>
            <person name="Mouser L."/>
            <person name="Nhan M."/>
            <person name="Rifkin L."/>
            <person name="Riles L."/>
            <person name="St Peter H."/>
            <person name="Trevaskis E."/>
            <person name="Vaughan K."/>
            <person name="Vignati D."/>
            <person name="Wilcox L."/>
            <person name="Wohldman P."/>
            <person name="Waterston R."/>
            <person name="Wilson R."/>
            <person name="Vaudin M."/>
        </authorList>
    </citation>
    <scope>NUCLEOTIDE SEQUENCE [LARGE SCALE GENOMIC DNA]</scope>
    <source>
        <strain>ATCC 204508 / S288c</strain>
    </source>
</reference>
<reference key="2">
    <citation type="journal article" date="2014" name="G3 (Bethesda)">
        <title>The reference genome sequence of Saccharomyces cerevisiae: Then and now.</title>
        <authorList>
            <person name="Engel S.R."/>
            <person name="Dietrich F.S."/>
            <person name="Fisk D.G."/>
            <person name="Binkley G."/>
            <person name="Balakrishnan R."/>
            <person name="Costanzo M.C."/>
            <person name="Dwight S.S."/>
            <person name="Hitz B.C."/>
            <person name="Karra K."/>
            <person name="Nash R.S."/>
            <person name="Weng S."/>
            <person name="Wong E.D."/>
            <person name="Lloyd P."/>
            <person name="Skrzypek M.S."/>
            <person name="Miyasato S.R."/>
            <person name="Simison M."/>
            <person name="Cherry J.M."/>
        </authorList>
    </citation>
    <scope>GENOME REANNOTATION</scope>
    <source>
        <strain>ATCC 204508 / S288c</strain>
    </source>
</reference>
<reference key="3">
    <citation type="journal article" date="2003" name="Nature">
        <title>Global analysis of protein expression in yeast.</title>
        <authorList>
            <person name="Ghaemmaghami S."/>
            <person name="Huh W.-K."/>
            <person name="Bower K."/>
            <person name="Howson R.W."/>
            <person name="Belle A."/>
            <person name="Dephoure N."/>
            <person name="O'Shea E.K."/>
            <person name="Weissman J.S."/>
        </authorList>
    </citation>
    <scope>LEVEL OF PROTEIN EXPRESSION [LARGE SCALE ANALYSIS]</scope>
</reference>
<reference key="4">
    <citation type="journal article" date="2014" name="J. Biol. Chem.">
        <title>Sec23 homolog Nel1 is a novel GTPase-activating protein for Sar1 but does not function as a subunit of the coat protein complex II (COPII) coat.</title>
        <authorList>
            <person name="Kodera C."/>
            <person name="Yorimitsu T."/>
            <person name="Sato K."/>
        </authorList>
    </citation>
    <scope>FUNCTION</scope>
    <scope>MUTAGENESIS OF ARG-592</scope>
    <scope>DISRUPTION PHENOTYPE</scope>
    <scope>SUBCELLULAR LOCATION</scope>
</reference>